<gene>
    <name type="primary">GSM1</name>
    <name type="ORF">SCY_3184</name>
</gene>
<accession>A6ZQM3</accession>
<sequence>MTKKLPSELKQTRKSIQTACEFCHTKHIQCDVGRPCQNCLKRNIGKFCRDKKRKSRKRIEKHGTQPYLNLGKRLVIHDVPSKTVSPSSVHLQRDFLSSDQEKPGKTPAHNTNIQYTYNINDNFQSAGSIPRITNFNTDNGQTVLENTSNNISASQAVHLMNDPIIPTVRKSTLNLKSHFLEQHKAMQQPLATNCLVATSNVPVHSGMDTSNKSDDDVDDETNIHFDSMWCNDEYMKLKDIVDISTPFLPNNSQIFSLQESEYPNPSASTRGNSSLHLTNLLNSTKSVNDQKDSSIGHSTSTFNTYDEVVSRPFISLDMLHLNRGANANTHPSHNAKLESECDSSSHSDADLEKHDTDFISPSKFRELVKTPQDLYDNKCLIKPHNYKLAYTKLLTTLRKKFLEGAEIDKSVSVKDEHSTQKHNLRYDLEVIIRSILERYAPIFISLTSNMIEEDLLLQEVTLQRALLDLENMAKLVSCTPMCIWRRSGEICFVSNEFYSLTGFNKNLLLDRTSFIFEYLDHKSVSNYFQIFNELLAFGYNDINKRKKLLMLNACSSTSSKITEGFSFTTDGKAIFTKCNLLLSNGLYLKCACCWTVKRDSFNIPILVMGQFLPIFEMD</sequence>
<protein>
    <recommendedName>
        <fullName>Glucose starvation modulator protein 1</fullName>
    </recommendedName>
</protein>
<reference key="1">
    <citation type="journal article" date="2007" name="Proc. Natl. Acad. Sci. U.S.A.">
        <title>Genome sequencing and comparative analysis of Saccharomyces cerevisiae strain YJM789.</title>
        <authorList>
            <person name="Wei W."/>
            <person name="McCusker J.H."/>
            <person name="Hyman R.W."/>
            <person name="Jones T."/>
            <person name="Ning Y."/>
            <person name="Cao Z."/>
            <person name="Gu Z."/>
            <person name="Bruno D."/>
            <person name="Miranda M."/>
            <person name="Nguyen M."/>
            <person name="Wilhelmy J."/>
            <person name="Komp C."/>
            <person name="Tamse R."/>
            <person name="Wang X."/>
            <person name="Jia P."/>
            <person name="Luedi P."/>
            <person name="Oefner P.J."/>
            <person name="David L."/>
            <person name="Dietrich F.S."/>
            <person name="Li Y."/>
            <person name="Davis R.W."/>
            <person name="Steinmetz L.M."/>
        </authorList>
    </citation>
    <scope>NUCLEOTIDE SEQUENCE [LARGE SCALE GENOMIC DNA]</scope>
    <source>
        <strain>YJM789</strain>
    </source>
</reference>
<dbReference type="EMBL" id="AAFW02000044">
    <property type="protein sequence ID" value="EDN63275.1"/>
    <property type="molecule type" value="Genomic_DNA"/>
</dbReference>
<dbReference type="HOGENOM" id="CLU_010748_2_2_1"/>
<dbReference type="Proteomes" id="UP000007060">
    <property type="component" value="Unassembled WGS sequence"/>
</dbReference>
<dbReference type="GO" id="GO:0005634">
    <property type="term" value="C:nucleus"/>
    <property type="evidence" value="ECO:0007669"/>
    <property type="project" value="UniProtKB-SubCell"/>
</dbReference>
<dbReference type="GO" id="GO:0000981">
    <property type="term" value="F:DNA-binding transcription factor activity, RNA polymerase II-specific"/>
    <property type="evidence" value="ECO:0007669"/>
    <property type="project" value="InterPro"/>
</dbReference>
<dbReference type="GO" id="GO:0000977">
    <property type="term" value="F:RNA polymerase II transcription regulatory region sequence-specific DNA binding"/>
    <property type="evidence" value="ECO:0007669"/>
    <property type="project" value="TreeGrafter"/>
</dbReference>
<dbReference type="GO" id="GO:0008270">
    <property type="term" value="F:zinc ion binding"/>
    <property type="evidence" value="ECO:0007669"/>
    <property type="project" value="InterPro"/>
</dbReference>
<dbReference type="GO" id="GO:0009267">
    <property type="term" value="P:cellular response to starvation"/>
    <property type="evidence" value="ECO:0007669"/>
    <property type="project" value="TreeGrafter"/>
</dbReference>
<dbReference type="CDD" id="cd00067">
    <property type="entry name" value="GAL4"/>
    <property type="match status" value="1"/>
</dbReference>
<dbReference type="Gene3D" id="4.10.240.10">
    <property type="entry name" value="Zn(2)-C6 fungal-type DNA-binding domain"/>
    <property type="match status" value="1"/>
</dbReference>
<dbReference type="InterPro" id="IPR050335">
    <property type="entry name" value="ERT1_acuK_gluconeogen_tf"/>
</dbReference>
<dbReference type="InterPro" id="IPR056751">
    <property type="entry name" value="PAS_13"/>
</dbReference>
<dbReference type="InterPro" id="IPR036864">
    <property type="entry name" value="Zn2-C6_fun-type_DNA-bd_sf"/>
</dbReference>
<dbReference type="InterPro" id="IPR001138">
    <property type="entry name" value="Zn2Cys6_DnaBD"/>
</dbReference>
<dbReference type="PANTHER" id="PTHR47659:SF8">
    <property type="entry name" value="GLUCOSE STARVATION MODULATOR PROTEIN 1"/>
    <property type="match status" value="1"/>
</dbReference>
<dbReference type="PANTHER" id="PTHR47659">
    <property type="entry name" value="ZN(II)2CYS6 TRANSCRIPTION FACTOR (EUROFUNG)-RELATED"/>
    <property type="match status" value="1"/>
</dbReference>
<dbReference type="Pfam" id="PF24990">
    <property type="entry name" value="PAS_13"/>
    <property type="match status" value="1"/>
</dbReference>
<dbReference type="Pfam" id="PF00172">
    <property type="entry name" value="Zn_clus"/>
    <property type="match status" value="1"/>
</dbReference>
<dbReference type="SMART" id="SM00066">
    <property type="entry name" value="GAL4"/>
    <property type="match status" value="1"/>
</dbReference>
<dbReference type="SUPFAM" id="SSF57701">
    <property type="entry name" value="Zn2/Cys6 DNA-binding domain"/>
    <property type="match status" value="1"/>
</dbReference>
<dbReference type="PROSITE" id="PS00463">
    <property type="entry name" value="ZN2_CY6_FUNGAL_1"/>
    <property type="match status" value="1"/>
</dbReference>
<dbReference type="PROSITE" id="PS50048">
    <property type="entry name" value="ZN2_CY6_FUNGAL_2"/>
    <property type="match status" value="1"/>
</dbReference>
<organism>
    <name type="scientific">Saccharomyces cerevisiae (strain YJM789)</name>
    <name type="common">Baker's yeast</name>
    <dbReference type="NCBI Taxonomy" id="307796"/>
    <lineage>
        <taxon>Eukaryota</taxon>
        <taxon>Fungi</taxon>
        <taxon>Dikarya</taxon>
        <taxon>Ascomycota</taxon>
        <taxon>Saccharomycotina</taxon>
        <taxon>Saccharomycetes</taxon>
        <taxon>Saccharomycetales</taxon>
        <taxon>Saccharomycetaceae</taxon>
        <taxon>Saccharomyces</taxon>
    </lineage>
</organism>
<comment type="function">
    <text evidence="1">Transcription factor which regulates nonfermentable carbon utilization. Binds specifically to 5'-CGGN(8)CGG-3' and 5'-CGGN(9)CGG-3' sequences in the promoter region (By similarity).</text>
</comment>
<comment type="subcellular location">
    <subcellularLocation>
        <location evidence="2">Nucleus</location>
    </subcellularLocation>
</comment>
<comment type="similarity">
    <text evidence="4">Belongs to the ERT1/acuK family.</text>
</comment>
<feature type="chain" id="PRO_0000406494" description="Glucose starvation modulator protein 1">
    <location>
        <begin position="1"/>
        <end position="618"/>
    </location>
</feature>
<feature type="domain" description="PAS">
    <location>
        <begin position="466"/>
        <end position="538"/>
    </location>
</feature>
<feature type="DNA-binding region" description="Zn(2)-C6 fungal-type" evidence="2">
    <location>
        <begin position="20"/>
        <end position="48"/>
    </location>
</feature>
<feature type="region of interest" description="Disordered" evidence="3">
    <location>
        <begin position="325"/>
        <end position="352"/>
    </location>
</feature>
<feature type="compositionally biased region" description="Basic and acidic residues" evidence="3">
    <location>
        <begin position="335"/>
        <end position="352"/>
    </location>
</feature>
<proteinExistence type="inferred from homology"/>
<name>GSM1_YEAS7</name>
<evidence type="ECO:0000250" key="1"/>
<evidence type="ECO:0000255" key="2">
    <source>
        <dbReference type="PROSITE-ProRule" id="PRU00227"/>
    </source>
</evidence>
<evidence type="ECO:0000256" key="3">
    <source>
        <dbReference type="SAM" id="MobiDB-lite"/>
    </source>
</evidence>
<evidence type="ECO:0000305" key="4"/>
<keyword id="KW-0238">DNA-binding</keyword>
<keyword id="KW-0479">Metal-binding</keyword>
<keyword id="KW-0539">Nucleus</keyword>
<keyword id="KW-0804">Transcription</keyword>
<keyword id="KW-0805">Transcription regulation</keyword>
<keyword id="KW-0862">Zinc</keyword>